<accession>P63667</accession>
<accession>Q97PT7</accession>
<organism>
    <name type="scientific">Streptococcus pneumoniae serotype 4 (strain ATCC BAA-334 / TIGR4)</name>
    <dbReference type="NCBI Taxonomy" id="170187"/>
    <lineage>
        <taxon>Bacteria</taxon>
        <taxon>Bacillati</taxon>
        <taxon>Bacillota</taxon>
        <taxon>Bacilli</taxon>
        <taxon>Lactobacillales</taxon>
        <taxon>Streptococcaceae</taxon>
        <taxon>Streptococcus</taxon>
    </lineage>
</organism>
<reference key="1">
    <citation type="journal article" date="2001" name="Science">
        <title>Complete genome sequence of a virulent isolate of Streptococcus pneumoniae.</title>
        <authorList>
            <person name="Tettelin H."/>
            <person name="Nelson K.E."/>
            <person name="Paulsen I.T."/>
            <person name="Eisen J.A."/>
            <person name="Read T.D."/>
            <person name="Peterson S.N."/>
            <person name="Heidelberg J.F."/>
            <person name="DeBoy R.T."/>
            <person name="Haft D.H."/>
            <person name="Dodson R.J."/>
            <person name="Durkin A.S."/>
            <person name="Gwinn M.L."/>
            <person name="Kolonay J.F."/>
            <person name="Nelson W.C."/>
            <person name="Peterson J.D."/>
            <person name="Umayam L.A."/>
            <person name="White O."/>
            <person name="Salzberg S.L."/>
            <person name="Lewis M.R."/>
            <person name="Radune D."/>
            <person name="Holtzapple E.K."/>
            <person name="Khouri H.M."/>
            <person name="Wolf A.M."/>
            <person name="Utterback T.R."/>
            <person name="Hansen C.L."/>
            <person name="McDonald L.A."/>
            <person name="Feldblyum T.V."/>
            <person name="Angiuoli S.V."/>
            <person name="Dickinson T."/>
            <person name="Hickey E.K."/>
            <person name="Holt I.E."/>
            <person name="Loftus B.J."/>
            <person name="Yang F."/>
            <person name="Smith H.O."/>
            <person name="Venter J.C."/>
            <person name="Dougherty B.A."/>
            <person name="Morrison D.A."/>
            <person name="Hollingshead S.K."/>
            <person name="Fraser C.M."/>
        </authorList>
    </citation>
    <scope>NUCLEOTIDE SEQUENCE [LARGE SCALE GENOMIC DNA]</scope>
    <source>
        <strain>ATCC BAA-334 / TIGR4</strain>
    </source>
</reference>
<name>ATPE_STRPN</name>
<dbReference type="EMBL" id="AE005672">
    <property type="protein sequence ID" value="AAK75598.1"/>
    <property type="molecule type" value="Genomic_DNA"/>
</dbReference>
<dbReference type="PIR" id="E95175">
    <property type="entry name" value="E95175"/>
</dbReference>
<dbReference type="RefSeq" id="WP_000068050.1">
    <property type="nucleotide sequence ID" value="NZ_CP155539.1"/>
</dbReference>
<dbReference type="SMR" id="P63667"/>
<dbReference type="PaxDb" id="170187-SP_1507"/>
<dbReference type="EnsemblBacteria" id="AAK75598">
    <property type="protein sequence ID" value="AAK75598"/>
    <property type="gene ID" value="SP_1507"/>
</dbReference>
<dbReference type="KEGG" id="spn:SP_1507"/>
<dbReference type="eggNOG" id="COG0355">
    <property type="taxonomic scope" value="Bacteria"/>
</dbReference>
<dbReference type="PhylomeDB" id="P63667"/>
<dbReference type="BioCyc" id="SPNE170187:G1FZB-1523-MONOMER"/>
<dbReference type="Proteomes" id="UP000000585">
    <property type="component" value="Chromosome"/>
</dbReference>
<dbReference type="GO" id="GO:0005886">
    <property type="term" value="C:plasma membrane"/>
    <property type="evidence" value="ECO:0007669"/>
    <property type="project" value="UniProtKB-SubCell"/>
</dbReference>
<dbReference type="GO" id="GO:0045259">
    <property type="term" value="C:proton-transporting ATP synthase complex"/>
    <property type="evidence" value="ECO:0007669"/>
    <property type="project" value="UniProtKB-KW"/>
</dbReference>
<dbReference type="GO" id="GO:0005524">
    <property type="term" value="F:ATP binding"/>
    <property type="evidence" value="ECO:0007669"/>
    <property type="project" value="UniProtKB-UniRule"/>
</dbReference>
<dbReference type="GO" id="GO:0046933">
    <property type="term" value="F:proton-transporting ATP synthase activity, rotational mechanism"/>
    <property type="evidence" value="ECO:0007669"/>
    <property type="project" value="UniProtKB-UniRule"/>
</dbReference>
<dbReference type="CDD" id="cd12152">
    <property type="entry name" value="F1-ATPase_delta"/>
    <property type="match status" value="1"/>
</dbReference>
<dbReference type="FunFam" id="1.20.5.440:FF:000001">
    <property type="entry name" value="ATP synthase epsilon chain"/>
    <property type="match status" value="1"/>
</dbReference>
<dbReference type="Gene3D" id="1.20.5.440">
    <property type="entry name" value="ATP synthase delta/epsilon subunit, C-terminal domain"/>
    <property type="match status" value="1"/>
</dbReference>
<dbReference type="Gene3D" id="2.60.15.10">
    <property type="entry name" value="F0F1 ATP synthase delta/epsilon subunit, N-terminal"/>
    <property type="match status" value="1"/>
</dbReference>
<dbReference type="HAMAP" id="MF_00530">
    <property type="entry name" value="ATP_synth_epsil_bac"/>
    <property type="match status" value="1"/>
</dbReference>
<dbReference type="InterPro" id="IPR001469">
    <property type="entry name" value="ATP_synth_F1_dsu/esu"/>
</dbReference>
<dbReference type="InterPro" id="IPR020546">
    <property type="entry name" value="ATP_synth_F1_dsu/esu_N"/>
</dbReference>
<dbReference type="InterPro" id="IPR020547">
    <property type="entry name" value="ATP_synth_F1_esu_C"/>
</dbReference>
<dbReference type="InterPro" id="IPR036771">
    <property type="entry name" value="ATPsynth_dsu/esu_N"/>
</dbReference>
<dbReference type="NCBIfam" id="TIGR01216">
    <property type="entry name" value="ATP_synt_epsi"/>
    <property type="match status" value="1"/>
</dbReference>
<dbReference type="NCBIfam" id="NF001846">
    <property type="entry name" value="PRK00571.1-3"/>
    <property type="match status" value="1"/>
</dbReference>
<dbReference type="PANTHER" id="PTHR13822">
    <property type="entry name" value="ATP SYNTHASE DELTA/EPSILON CHAIN"/>
    <property type="match status" value="1"/>
</dbReference>
<dbReference type="PANTHER" id="PTHR13822:SF10">
    <property type="entry name" value="ATP SYNTHASE EPSILON CHAIN, CHLOROPLASTIC"/>
    <property type="match status" value="1"/>
</dbReference>
<dbReference type="Pfam" id="PF00401">
    <property type="entry name" value="ATP-synt_DE"/>
    <property type="match status" value="1"/>
</dbReference>
<dbReference type="Pfam" id="PF02823">
    <property type="entry name" value="ATP-synt_DE_N"/>
    <property type="match status" value="1"/>
</dbReference>
<dbReference type="SUPFAM" id="SSF51344">
    <property type="entry name" value="Epsilon subunit of F1F0-ATP synthase N-terminal domain"/>
    <property type="match status" value="1"/>
</dbReference>
<proteinExistence type="inferred from homology"/>
<evidence type="ECO:0000255" key="1">
    <source>
        <dbReference type="HAMAP-Rule" id="MF_00530"/>
    </source>
</evidence>
<gene>
    <name evidence="1" type="primary">atpC</name>
    <name type="ordered locus">SP_1507</name>
</gene>
<sequence length="139" mass="15638">MAQLTVQIVTPDGLVYDHHASYVSVRTLDGEMGILPRHENMIAVLAVDEVKVKRIDDKDHVNWIAVNGGVIEIANDMITIVADSAERARDIDISRAERAKLRAERAIEEAQDKHLIDQERRAKIALQRAINRINVGNRL</sequence>
<comment type="function">
    <text evidence="1">Produces ATP from ADP in the presence of a proton gradient across the membrane.</text>
</comment>
<comment type="subunit">
    <text>F-type ATPases have 2 components, CF(1) - the catalytic core - and CF(0) - the membrane proton channel. CF(1) has five subunits: alpha(3), beta(3), gamma(1), delta(1), epsilon(1). CF(0) has three main subunits: a, b and c.</text>
</comment>
<comment type="subcellular location">
    <subcellularLocation>
        <location evidence="1">Cell membrane</location>
        <topology evidence="1">Peripheral membrane protein</topology>
    </subcellularLocation>
</comment>
<comment type="similarity">
    <text evidence="1">Belongs to the ATPase epsilon chain family.</text>
</comment>
<protein>
    <recommendedName>
        <fullName evidence="1">ATP synthase epsilon chain</fullName>
    </recommendedName>
    <alternativeName>
        <fullName evidence="1">ATP synthase F1 sector epsilon subunit</fullName>
    </alternativeName>
    <alternativeName>
        <fullName evidence="1">F-ATPase epsilon subunit</fullName>
    </alternativeName>
</protein>
<keyword id="KW-0066">ATP synthesis</keyword>
<keyword id="KW-1003">Cell membrane</keyword>
<keyword id="KW-0139">CF(1)</keyword>
<keyword id="KW-0375">Hydrogen ion transport</keyword>
<keyword id="KW-0406">Ion transport</keyword>
<keyword id="KW-0472">Membrane</keyword>
<keyword id="KW-1185">Reference proteome</keyword>
<keyword id="KW-0813">Transport</keyword>
<feature type="chain" id="PRO_0000188217" description="ATP synthase epsilon chain">
    <location>
        <begin position="1"/>
        <end position="139"/>
    </location>
</feature>